<sequence>MSKLFYAFAVLAVHVLTSSPTTAASNLPVNLVTGPAFTTPAGAAHRRFLRSIHEGEDSLKPSAFSEERTALRAMAYLLKPKQKKLAAALKKSTSKHKLSVAPEKMKSIQVLGDPKNPEREWFKRLYNSKRGDPQTLRKLGQFKTEAQLSRYIKFYDDMLAKAKNVRVQTK</sequence>
<dbReference type="EMBL" id="DS028151">
    <property type="protein sequence ID" value="EEY62612.1"/>
    <property type="molecule type" value="Genomic_DNA"/>
</dbReference>
<dbReference type="EMBL" id="DS028151">
    <property type="protein sequence ID" value="EEY62613.1"/>
    <property type="molecule type" value="Genomic_DNA"/>
</dbReference>
<dbReference type="RefSeq" id="XP_002898854.1">
    <property type="nucleotide sequence ID" value="XM_002898808.1"/>
</dbReference>
<dbReference type="RefSeq" id="XP_002898855.1">
    <property type="nucleotide sequence ID" value="XM_002898809.1"/>
</dbReference>
<dbReference type="STRING" id="403677.D0NPQ0"/>
<dbReference type="EnsemblProtists" id="PITG_23014T0">
    <property type="protein sequence ID" value="PITG_23014T0"/>
    <property type="gene ID" value="PITG_23014"/>
</dbReference>
<dbReference type="EnsemblProtists" id="PITG_23015T0">
    <property type="protein sequence ID" value="PITG_23015T0"/>
    <property type="gene ID" value="PITG_23015"/>
</dbReference>
<dbReference type="GeneID" id="9479707"/>
<dbReference type="GeneID" id="9479708"/>
<dbReference type="KEGG" id="pif:PITG_23014"/>
<dbReference type="KEGG" id="pif:PITG_23015"/>
<dbReference type="VEuPathDB" id="FungiDB:PITG_23014"/>
<dbReference type="VEuPathDB" id="FungiDB:PITG_23015"/>
<dbReference type="eggNOG" id="ENOG502RH1J">
    <property type="taxonomic scope" value="Eukaryota"/>
</dbReference>
<dbReference type="HOGENOM" id="CLU_1573705_0_0_1"/>
<dbReference type="InParanoid" id="D0NPQ0"/>
<dbReference type="OMA" id="QFARYNA"/>
<dbReference type="Proteomes" id="UP000006643">
    <property type="component" value="Partially assembled WGS sequence"/>
</dbReference>
<dbReference type="GO" id="GO:0005576">
    <property type="term" value="C:extracellular region"/>
    <property type="evidence" value="ECO:0007669"/>
    <property type="project" value="UniProtKB-SubCell"/>
</dbReference>
<dbReference type="GO" id="GO:0030430">
    <property type="term" value="C:host cell cytoplasm"/>
    <property type="evidence" value="ECO:0007669"/>
    <property type="project" value="UniProtKB-SubCell"/>
</dbReference>
<dbReference type="GO" id="GO:0042025">
    <property type="term" value="C:host cell nucleus"/>
    <property type="evidence" value="ECO:0007669"/>
    <property type="project" value="UniProtKB-SubCell"/>
</dbReference>
<name>CRE16_PHYIT</name>
<organism>
    <name type="scientific">Phytophthora infestans (strain T30-4)</name>
    <name type="common">Potato late blight agent</name>
    <dbReference type="NCBI Taxonomy" id="403677"/>
    <lineage>
        <taxon>Eukaryota</taxon>
        <taxon>Sar</taxon>
        <taxon>Stramenopiles</taxon>
        <taxon>Oomycota</taxon>
        <taxon>Peronosporales</taxon>
        <taxon>Peronosporaceae</taxon>
        <taxon>Phytophthora</taxon>
    </lineage>
</organism>
<protein>
    <recommendedName>
        <fullName evidence="7">RxLR effector protein CRE16</fullName>
    </recommendedName>
    <alternativeName>
        <fullName evidence="6">Core RXLR effector 16</fullName>
    </alternativeName>
</protein>
<accession>D0NPQ0</accession>
<keyword id="KW-1035">Host cytoplasm</keyword>
<keyword id="KW-1048">Host nucleus</keyword>
<keyword id="KW-1185">Reference proteome</keyword>
<keyword id="KW-0964">Secreted</keyword>
<keyword id="KW-0732">Signal</keyword>
<keyword id="KW-0843">Virulence</keyword>
<gene>
    <name evidence="6" type="primary">CRE16</name>
    <name type="ORF">PITG_23014</name>
    <name type="ORF">PITG_23015</name>
</gene>
<feature type="signal peptide" evidence="1">
    <location>
        <begin position="1"/>
        <end position="23"/>
    </location>
</feature>
<feature type="chain" id="PRO_5010111079" description="RxLR effector protein CRE16">
    <location>
        <begin position="24"/>
        <end position="170"/>
    </location>
</feature>
<feature type="short sequence motif" description="RxLR-dEER" evidence="9">
    <location>
        <begin position="47"/>
        <end position="68"/>
    </location>
</feature>
<comment type="function">
    <text evidence="4 5">Effector that is involved in host plant infection. Contributes to virulence during the early infection stage, by inhibiting plant defense responses induced by both PAMP-triggered immunity (PTI) and effector-triggered immunity (ETI).</text>
</comment>
<comment type="subcellular location">
    <subcellularLocation>
        <location evidence="5">Secreted</location>
    </subcellularLocation>
    <subcellularLocation>
        <location evidence="5">Host cytoplasm</location>
    </subcellularLocation>
    <subcellularLocation>
        <location evidence="5">Host nucleus</location>
    </subcellularLocation>
</comment>
<comment type="induction">
    <text evidence="2 3 4">Expression is induced during host plant infection.</text>
</comment>
<comment type="domain">
    <text evidence="9">The RxLR-dEER motif acts to carry the protein into the host cell cytoplasm through binding to cell surface phosphatidylinositol-3-phosphate.</text>
</comment>
<comment type="similarity">
    <text evidence="8">Belongs to the RxLR effector family.</text>
</comment>
<reference key="1">
    <citation type="journal article" date="2009" name="Nature">
        <title>Genome sequence and analysis of the Irish potato famine pathogen Phytophthora infestans.</title>
        <authorList>
            <consortium name="The Broad Institute Genome Sequencing Platform"/>
            <person name="Haas B.J."/>
            <person name="Kamoun S."/>
            <person name="Zody M.C."/>
            <person name="Jiang R.H."/>
            <person name="Handsaker R.E."/>
            <person name="Cano L.M."/>
            <person name="Grabherr M."/>
            <person name="Kodira C.D."/>
            <person name="Raffaele S."/>
            <person name="Torto-Alalibo T."/>
            <person name="Bozkurt T.O."/>
            <person name="Ah-Fong A.M."/>
            <person name="Alvarado L."/>
            <person name="Anderson V.L."/>
            <person name="Armstrong M.R."/>
            <person name="Avrova A."/>
            <person name="Baxter L."/>
            <person name="Beynon J."/>
            <person name="Boevink P.C."/>
            <person name="Bollmann S.R."/>
            <person name="Bos J.I."/>
            <person name="Bulone V."/>
            <person name="Cai G."/>
            <person name="Cakir C."/>
            <person name="Carrington J.C."/>
            <person name="Chawner M."/>
            <person name="Conti L."/>
            <person name="Costanzo S."/>
            <person name="Ewan R."/>
            <person name="Fahlgren N."/>
            <person name="Fischbach M.A."/>
            <person name="Fugelstad J."/>
            <person name="Gilroy E.M."/>
            <person name="Gnerre S."/>
            <person name="Green P.J."/>
            <person name="Grenville-Briggs L.J."/>
            <person name="Griffith J."/>
            <person name="Grunwald N.J."/>
            <person name="Horn K."/>
            <person name="Horner N.R."/>
            <person name="Hu C.H."/>
            <person name="Huitema E."/>
            <person name="Jeong D.H."/>
            <person name="Jones A.M."/>
            <person name="Jones J.D."/>
            <person name="Jones R.W."/>
            <person name="Karlsson E.K."/>
            <person name="Kunjeti S.G."/>
            <person name="Lamour K."/>
            <person name="Liu Z."/>
            <person name="Ma L."/>
            <person name="Maclean D."/>
            <person name="Chibucos M.C."/>
            <person name="McDonald H."/>
            <person name="McWalters J."/>
            <person name="Meijer H.J."/>
            <person name="Morgan W."/>
            <person name="Morris P.F."/>
            <person name="Munro C.A."/>
            <person name="O'Neill K."/>
            <person name="Ospina-Giraldo M."/>
            <person name="Pinzon A."/>
            <person name="Pritchard L."/>
            <person name="Ramsahoye B."/>
            <person name="Ren Q."/>
            <person name="Restrepo S."/>
            <person name="Roy S."/>
            <person name="Sadanandom A."/>
            <person name="Savidor A."/>
            <person name="Schornack S."/>
            <person name="Schwartz D.C."/>
            <person name="Schumann U.D."/>
            <person name="Schwessinger B."/>
            <person name="Seyer L."/>
            <person name="Sharpe T."/>
            <person name="Silvar C."/>
            <person name="Song J."/>
            <person name="Studholme D.J."/>
            <person name="Sykes S."/>
            <person name="Thines M."/>
            <person name="van de Vondervoort P.J."/>
            <person name="Phuntumart V."/>
            <person name="Wawra S."/>
            <person name="Weide R."/>
            <person name="Win J."/>
            <person name="Young C."/>
            <person name="Zhou S."/>
            <person name="Fry W."/>
            <person name="Meyers B.C."/>
            <person name="van West P."/>
            <person name="Ristaino J."/>
            <person name="Govers F."/>
            <person name="Birch P.R."/>
            <person name="Whisson S.C."/>
            <person name="Judelson H.S."/>
            <person name="Nusbaum C."/>
        </authorList>
    </citation>
    <scope>NUCLEOTIDE SEQUENCE [LARGE SCALE GENOMIC DNA]</scope>
    <scope>INDUCTION</scope>
    <source>
        <strain>T30-4</strain>
    </source>
</reference>
<reference key="2">
    <citation type="journal article" date="2017" name="BMC Genomics">
        <title>RNA-seq of life stages of the oomycete Phytophthora infestans reveals dynamic changes in metabolic, signal transduction, and pathogenesis genes and a major role for calcium signaling in development.</title>
        <authorList>
            <person name="Ah-Fong A.M."/>
            <person name="Kim K.S."/>
            <person name="Judelson H.S."/>
        </authorList>
    </citation>
    <scope>INDUCTION</scope>
</reference>
<reference key="3">
    <citation type="journal article" date="2017" name="Front. Plant Sci.">
        <title>Conserved RXLR effector genes of Phytophthora infestans expressed at the early stage of potato infection are suppressive to host defense.</title>
        <authorList>
            <person name="Yin J."/>
            <person name="Gu B."/>
            <person name="Huang G."/>
            <person name="Tian Y."/>
            <person name="Quan J."/>
            <person name="Lindqvist-Kreuze H."/>
            <person name="Shan W."/>
        </authorList>
    </citation>
    <scope>INDUCTION</scope>
    <scope>FUNCTION</scope>
    <scope>DOMAIN</scope>
</reference>
<reference key="4">
    <citation type="journal article" date="2019" name="J. Exp. Bot.">
        <title>Phytophthora infestans RXLR effectors act in concert at diverse subcellular locations to enhance host colonization.</title>
        <authorList>
            <person name="Wang S."/>
            <person name="McLellan H."/>
            <person name="Bukharova T."/>
            <person name="He Q."/>
            <person name="Murphy F."/>
            <person name="Shi J."/>
            <person name="Sun S."/>
            <person name="van Weymers P."/>
            <person name="Ren Y."/>
            <person name="Thilliez G."/>
            <person name="Wang H."/>
            <person name="Chen X."/>
            <person name="Engelhardt S."/>
            <person name="Vleeshouwers V."/>
            <person name="Gilroy E.M."/>
            <person name="Whisson S.C."/>
            <person name="Hein I."/>
            <person name="Wang X."/>
            <person name="Tian Z."/>
            <person name="Birch P.R.J."/>
            <person name="Boevink P.C."/>
        </authorList>
    </citation>
    <scope>SUBCELLULAR LOCATION</scope>
    <scope>FUNCTION</scope>
</reference>
<evidence type="ECO:0000255" key="1"/>
<evidence type="ECO:0000269" key="2">
    <source>
    </source>
</evidence>
<evidence type="ECO:0000269" key="3">
    <source>
    </source>
</evidence>
<evidence type="ECO:0000269" key="4">
    <source>
    </source>
</evidence>
<evidence type="ECO:0000269" key="5">
    <source>
    </source>
</evidence>
<evidence type="ECO:0000303" key="6">
    <source>
    </source>
</evidence>
<evidence type="ECO:0000303" key="7">
    <source>
    </source>
</evidence>
<evidence type="ECO:0000305" key="8"/>
<evidence type="ECO:0000305" key="9">
    <source>
    </source>
</evidence>
<proteinExistence type="evidence at transcript level"/>